<dbReference type="EC" id="6.2.1.5" evidence="1"/>
<dbReference type="EMBL" id="AP008934">
    <property type="protein sequence ID" value="BAE18666.1"/>
    <property type="molecule type" value="Genomic_DNA"/>
</dbReference>
<dbReference type="RefSeq" id="WP_011303271.1">
    <property type="nucleotide sequence ID" value="NZ_MTGA01000034.1"/>
</dbReference>
<dbReference type="SMR" id="Q49X32"/>
<dbReference type="GeneID" id="3615167"/>
<dbReference type="KEGG" id="ssp:SSP1521"/>
<dbReference type="PATRIC" id="fig|342451.11.peg.1523"/>
<dbReference type="eggNOG" id="COG0045">
    <property type="taxonomic scope" value="Bacteria"/>
</dbReference>
<dbReference type="HOGENOM" id="CLU_037430_0_2_9"/>
<dbReference type="OrthoDB" id="9802602at2"/>
<dbReference type="UniPathway" id="UPA00223">
    <property type="reaction ID" value="UER00999"/>
</dbReference>
<dbReference type="Proteomes" id="UP000006371">
    <property type="component" value="Chromosome"/>
</dbReference>
<dbReference type="GO" id="GO:0005829">
    <property type="term" value="C:cytosol"/>
    <property type="evidence" value="ECO:0007669"/>
    <property type="project" value="TreeGrafter"/>
</dbReference>
<dbReference type="GO" id="GO:0042709">
    <property type="term" value="C:succinate-CoA ligase complex"/>
    <property type="evidence" value="ECO:0007669"/>
    <property type="project" value="TreeGrafter"/>
</dbReference>
<dbReference type="GO" id="GO:0005524">
    <property type="term" value="F:ATP binding"/>
    <property type="evidence" value="ECO:0007669"/>
    <property type="project" value="UniProtKB-UniRule"/>
</dbReference>
<dbReference type="GO" id="GO:0000287">
    <property type="term" value="F:magnesium ion binding"/>
    <property type="evidence" value="ECO:0007669"/>
    <property type="project" value="UniProtKB-UniRule"/>
</dbReference>
<dbReference type="GO" id="GO:0004775">
    <property type="term" value="F:succinate-CoA ligase (ADP-forming) activity"/>
    <property type="evidence" value="ECO:0007669"/>
    <property type="project" value="UniProtKB-UniRule"/>
</dbReference>
<dbReference type="GO" id="GO:0004776">
    <property type="term" value="F:succinate-CoA ligase (GDP-forming) activity"/>
    <property type="evidence" value="ECO:0007669"/>
    <property type="project" value="RHEA"/>
</dbReference>
<dbReference type="GO" id="GO:0006104">
    <property type="term" value="P:succinyl-CoA metabolic process"/>
    <property type="evidence" value="ECO:0007669"/>
    <property type="project" value="TreeGrafter"/>
</dbReference>
<dbReference type="GO" id="GO:0006099">
    <property type="term" value="P:tricarboxylic acid cycle"/>
    <property type="evidence" value="ECO:0007669"/>
    <property type="project" value="UniProtKB-UniRule"/>
</dbReference>
<dbReference type="FunFam" id="3.30.1490.20:FF:000002">
    <property type="entry name" value="Succinate--CoA ligase [ADP-forming] subunit beta"/>
    <property type="match status" value="1"/>
</dbReference>
<dbReference type="FunFam" id="3.30.470.20:FF:000002">
    <property type="entry name" value="Succinate--CoA ligase [ADP-forming] subunit beta"/>
    <property type="match status" value="1"/>
</dbReference>
<dbReference type="FunFam" id="3.40.50.261:FF:000001">
    <property type="entry name" value="Succinate--CoA ligase [ADP-forming] subunit beta"/>
    <property type="match status" value="1"/>
</dbReference>
<dbReference type="Gene3D" id="3.30.1490.20">
    <property type="entry name" value="ATP-grasp fold, A domain"/>
    <property type="match status" value="1"/>
</dbReference>
<dbReference type="Gene3D" id="3.30.470.20">
    <property type="entry name" value="ATP-grasp fold, B domain"/>
    <property type="match status" value="1"/>
</dbReference>
<dbReference type="Gene3D" id="3.40.50.261">
    <property type="entry name" value="Succinyl-CoA synthetase domains"/>
    <property type="match status" value="1"/>
</dbReference>
<dbReference type="HAMAP" id="MF_00558">
    <property type="entry name" value="Succ_CoA_beta"/>
    <property type="match status" value="1"/>
</dbReference>
<dbReference type="InterPro" id="IPR011761">
    <property type="entry name" value="ATP-grasp"/>
</dbReference>
<dbReference type="InterPro" id="IPR013650">
    <property type="entry name" value="ATP-grasp_succ-CoA_synth-type"/>
</dbReference>
<dbReference type="InterPro" id="IPR013815">
    <property type="entry name" value="ATP_grasp_subdomain_1"/>
</dbReference>
<dbReference type="InterPro" id="IPR017866">
    <property type="entry name" value="Succ-CoA_synthase_bsu_CS"/>
</dbReference>
<dbReference type="InterPro" id="IPR005811">
    <property type="entry name" value="SUCC_ACL_C"/>
</dbReference>
<dbReference type="InterPro" id="IPR005809">
    <property type="entry name" value="Succ_CoA_ligase-like_bsu"/>
</dbReference>
<dbReference type="InterPro" id="IPR016102">
    <property type="entry name" value="Succinyl-CoA_synth-like"/>
</dbReference>
<dbReference type="NCBIfam" id="NF001913">
    <property type="entry name" value="PRK00696.1"/>
    <property type="match status" value="1"/>
</dbReference>
<dbReference type="NCBIfam" id="TIGR01016">
    <property type="entry name" value="sucCoAbeta"/>
    <property type="match status" value="1"/>
</dbReference>
<dbReference type="PANTHER" id="PTHR11815:SF10">
    <property type="entry name" value="SUCCINATE--COA LIGASE [GDP-FORMING] SUBUNIT BETA, MITOCHONDRIAL"/>
    <property type="match status" value="1"/>
</dbReference>
<dbReference type="PANTHER" id="PTHR11815">
    <property type="entry name" value="SUCCINYL-COA SYNTHETASE BETA CHAIN"/>
    <property type="match status" value="1"/>
</dbReference>
<dbReference type="Pfam" id="PF08442">
    <property type="entry name" value="ATP-grasp_2"/>
    <property type="match status" value="1"/>
</dbReference>
<dbReference type="Pfam" id="PF00549">
    <property type="entry name" value="Ligase_CoA"/>
    <property type="match status" value="1"/>
</dbReference>
<dbReference type="PIRSF" id="PIRSF001554">
    <property type="entry name" value="SucCS_beta"/>
    <property type="match status" value="1"/>
</dbReference>
<dbReference type="SUPFAM" id="SSF56059">
    <property type="entry name" value="Glutathione synthetase ATP-binding domain-like"/>
    <property type="match status" value="1"/>
</dbReference>
<dbReference type="SUPFAM" id="SSF52210">
    <property type="entry name" value="Succinyl-CoA synthetase domains"/>
    <property type="match status" value="1"/>
</dbReference>
<dbReference type="PROSITE" id="PS50975">
    <property type="entry name" value="ATP_GRASP"/>
    <property type="match status" value="1"/>
</dbReference>
<dbReference type="PROSITE" id="PS01217">
    <property type="entry name" value="SUCCINYL_COA_LIG_3"/>
    <property type="match status" value="1"/>
</dbReference>
<sequence>MNIHEYQGKAIFRSMGVAVPEGRVAYTAEEAVEKAKELDSKVYVVKAQIHAGGRGKAGGVKIAKSLSEVETYAKELLGKTLVTHQTGPEGKEIKRLYIEEGCDIQKEYYVGFVIDRATDRVTLMASEEGGTEIEEVAAKTPEKIFKETIDPVVGLAPYQARRIAFNINIPKESINKAAKFLVSLYNVFIEKDCSIVEINPLVTTGEGEVLALDAKVNFDDNALFKHKDIQELRDLEEEDPKEIEASKYDLSYIALDGDIGCMVNGAGLAMATMDTINHFGGNPANFLDVGGGATKEKVTEAFKIILGDENVKGIFVNIFGGIMKCDIIAEGIVAAVKEVELTLPLVVRLEGTNVERGKEILKESGLAIEPAATMAEGAQKIVKLVKEA</sequence>
<feature type="chain" id="PRO_0000102868" description="Succinate--CoA ligase [ADP-forming] subunit beta">
    <location>
        <begin position="1"/>
        <end position="388"/>
    </location>
</feature>
<feature type="domain" description="ATP-grasp" evidence="1">
    <location>
        <begin position="9"/>
        <end position="244"/>
    </location>
</feature>
<feature type="binding site" evidence="1">
    <location>
        <position position="46"/>
    </location>
    <ligand>
        <name>ATP</name>
        <dbReference type="ChEBI" id="CHEBI:30616"/>
    </ligand>
</feature>
<feature type="binding site" evidence="1">
    <location>
        <begin position="53"/>
        <end position="55"/>
    </location>
    <ligand>
        <name>ATP</name>
        <dbReference type="ChEBI" id="CHEBI:30616"/>
    </ligand>
</feature>
<feature type="binding site" evidence="1">
    <location>
        <position position="99"/>
    </location>
    <ligand>
        <name>ATP</name>
        <dbReference type="ChEBI" id="CHEBI:30616"/>
    </ligand>
</feature>
<feature type="binding site" evidence="1">
    <location>
        <position position="102"/>
    </location>
    <ligand>
        <name>ATP</name>
        <dbReference type="ChEBI" id="CHEBI:30616"/>
    </ligand>
</feature>
<feature type="binding site" evidence="1">
    <location>
        <position position="107"/>
    </location>
    <ligand>
        <name>ATP</name>
        <dbReference type="ChEBI" id="CHEBI:30616"/>
    </ligand>
</feature>
<feature type="binding site" evidence="1">
    <location>
        <position position="199"/>
    </location>
    <ligand>
        <name>Mg(2+)</name>
        <dbReference type="ChEBI" id="CHEBI:18420"/>
    </ligand>
</feature>
<feature type="binding site" evidence="1">
    <location>
        <position position="213"/>
    </location>
    <ligand>
        <name>Mg(2+)</name>
        <dbReference type="ChEBI" id="CHEBI:18420"/>
    </ligand>
</feature>
<feature type="binding site" evidence="1">
    <location>
        <position position="264"/>
    </location>
    <ligand>
        <name>substrate</name>
        <note>ligand shared with subunit alpha</note>
    </ligand>
</feature>
<feature type="binding site" evidence="1">
    <location>
        <begin position="321"/>
        <end position="323"/>
    </location>
    <ligand>
        <name>substrate</name>
        <note>ligand shared with subunit alpha</note>
    </ligand>
</feature>
<protein>
    <recommendedName>
        <fullName evidence="1">Succinate--CoA ligase [ADP-forming] subunit beta</fullName>
        <ecNumber evidence="1">6.2.1.5</ecNumber>
    </recommendedName>
    <alternativeName>
        <fullName evidence="1">Succinyl-CoA synthetase subunit beta</fullName>
        <shortName evidence="1">SCS-beta</shortName>
    </alternativeName>
</protein>
<evidence type="ECO:0000255" key="1">
    <source>
        <dbReference type="HAMAP-Rule" id="MF_00558"/>
    </source>
</evidence>
<keyword id="KW-0067">ATP-binding</keyword>
<keyword id="KW-0436">Ligase</keyword>
<keyword id="KW-0460">Magnesium</keyword>
<keyword id="KW-0479">Metal-binding</keyword>
<keyword id="KW-0547">Nucleotide-binding</keyword>
<keyword id="KW-1185">Reference proteome</keyword>
<keyword id="KW-0816">Tricarboxylic acid cycle</keyword>
<accession>Q49X32</accession>
<comment type="function">
    <text evidence="1">Succinyl-CoA synthetase functions in the citric acid cycle (TCA), coupling the hydrolysis of succinyl-CoA to the synthesis of either ATP or GTP and thus represents the only step of substrate-level phosphorylation in the TCA. The beta subunit provides nucleotide specificity of the enzyme and binds the substrate succinate, while the binding sites for coenzyme A and phosphate are found in the alpha subunit.</text>
</comment>
<comment type="catalytic activity">
    <reaction evidence="1">
        <text>succinate + ATP + CoA = succinyl-CoA + ADP + phosphate</text>
        <dbReference type="Rhea" id="RHEA:17661"/>
        <dbReference type="ChEBI" id="CHEBI:30031"/>
        <dbReference type="ChEBI" id="CHEBI:30616"/>
        <dbReference type="ChEBI" id="CHEBI:43474"/>
        <dbReference type="ChEBI" id="CHEBI:57287"/>
        <dbReference type="ChEBI" id="CHEBI:57292"/>
        <dbReference type="ChEBI" id="CHEBI:456216"/>
        <dbReference type="EC" id="6.2.1.5"/>
    </reaction>
    <physiologicalReaction direction="right-to-left" evidence="1">
        <dbReference type="Rhea" id="RHEA:17663"/>
    </physiologicalReaction>
</comment>
<comment type="catalytic activity">
    <reaction evidence="1">
        <text>GTP + succinate + CoA = succinyl-CoA + GDP + phosphate</text>
        <dbReference type="Rhea" id="RHEA:22120"/>
        <dbReference type="ChEBI" id="CHEBI:30031"/>
        <dbReference type="ChEBI" id="CHEBI:37565"/>
        <dbReference type="ChEBI" id="CHEBI:43474"/>
        <dbReference type="ChEBI" id="CHEBI:57287"/>
        <dbReference type="ChEBI" id="CHEBI:57292"/>
        <dbReference type="ChEBI" id="CHEBI:58189"/>
    </reaction>
    <physiologicalReaction direction="right-to-left" evidence="1">
        <dbReference type="Rhea" id="RHEA:22122"/>
    </physiologicalReaction>
</comment>
<comment type="cofactor">
    <cofactor evidence="1">
        <name>Mg(2+)</name>
        <dbReference type="ChEBI" id="CHEBI:18420"/>
    </cofactor>
    <text evidence="1">Binds 1 Mg(2+) ion per subunit.</text>
</comment>
<comment type="pathway">
    <text evidence="1">Carbohydrate metabolism; tricarboxylic acid cycle; succinate from succinyl-CoA (ligase route): step 1/1.</text>
</comment>
<comment type="subunit">
    <text evidence="1">Heterotetramer of two alpha and two beta subunits.</text>
</comment>
<comment type="similarity">
    <text evidence="1">Belongs to the succinate/malate CoA ligase beta subunit family.</text>
</comment>
<proteinExistence type="inferred from homology"/>
<gene>
    <name evidence="1" type="primary">sucC</name>
    <name type="ordered locus">SSP1521</name>
</gene>
<name>SUCC_STAS1</name>
<organism>
    <name type="scientific">Staphylococcus saprophyticus subsp. saprophyticus (strain ATCC 15305 / DSM 20229 / NCIMB 8711 / NCTC 7292 / S-41)</name>
    <dbReference type="NCBI Taxonomy" id="342451"/>
    <lineage>
        <taxon>Bacteria</taxon>
        <taxon>Bacillati</taxon>
        <taxon>Bacillota</taxon>
        <taxon>Bacilli</taxon>
        <taxon>Bacillales</taxon>
        <taxon>Staphylococcaceae</taxon>
        <taxon>Staphylococcus</taxon>
    </lineage>
</organism>
<reference key="1">
    <citation type="journal article" date="2005" name="Proc. Natl. Acad. Sci. U.S.A.">
        <title>Whole genome sequence of Staphylococcus saprophyticus reveals the pathogenesis of uncomplicated urinary tract infection.</title>
        <authorList>
            <person name="Kuroda M."/>
            <person name="Yamashita A."/>
            <person name="Hirakawa H."/>
            <person name="Kumano M."/>
            <person name="Morikawa K."/>
            <person name="Higashide M."/>
            <person name="Maruyama A."/>
            <person name="Inose Y."/>
            <person name="Matoba K."/>
            <person name="Toh H."/>
            <person name="Kuhara S."/>
            <person name="Hattori M."/>
            <person name="Ohta T."/>
        </authorList>
    </citation>
    <scope>NUCLEOTIDE SEQUENCE [LARGE SCALE GENOMIC DNA]</scope>
    <source>
        <strain>ATCC 15305 / DSM 20229 / NCIMB 8711 / NCTC 7292 / S-41</strain>
    </source>
</reference>